<protein>
    <recommendedName>
        <fullName evidence="1">Ribosome-recycling factor</fullName>
        <shortName evidence="1">RRF</shortName>
    </recommendedName>
    <alternativeName>
        <fullName evidence="1">Ribosome-releasing factor</fullName>
    </alternativeName>
</protein>
<sequence>MSVTSIMDDLKRRMDGAISAFKHELSGLRTGRASASLLEPLTVEAYGSVVPIKQVANISVLEPRMLSVSVWDKTMVGAVERAIRDCGFGLNPIVDGMNLRIPLPELNEERRKELVKIAHQYAEQARVAIRHVRRDGMDNLKKLEKEGEISQDEARSLSEKVQKLTDDAIADIDKILIMKETEIMQV</sequence>
<dbReference type="EMBL" id="AF469610">
    <property type="protein sequence ID" value="AAL82407.1"/>
    <property type="molecule type" value="Genomic_DNA"/>
</dbReference>
<dbReference type="EMBL" id="CP000524">
    <property type="protein sequence ID" value="ABM45147.1"/>
    <property type="molecule type" value="Genomic_DNA"/>
</dbReference>
<dbReference type="RefSeq" id="WP_005766753.1">
    <property type="nucleotide sequence ID" value="NC_008783.1"/>
</dbReference>
<dbReference type="SMR" id="Q8RT64"/>
<dbReference type="STRING" id="360095.BARBAKC583_0586"/>
<dbReference type="GeneID" id="4684082"/>
<dbReference type="KEGG" id="bbk:BARBAKC583_0586"/>
<dbReference type="PATRIC" id="fig|360095.6.peg.571"/>
<dbReference type="eggNOG" id="COG0233">
    <property type="taxonomic scope" value="Bacteria"/>
</dbReference>
<dbReference type="HOGENOM" id="CLU_073981_2_0_5"/>
<dbReference type="OrthoDB" id="9804006at2"/>
<dbReference type="Proteomes" id="UP000000643">
    <property type="component" value="Chromosome"/>
</dbReference>
<dbReference type="GO" id="GO:0005829">
    <property type="term" value="C:cytosol"/>
    <property type="evidence" value="ECO:0007669"/>
    <property type="project" value="GOC"/>
</dbReference>
<dbReference type="GO" id="GO:0043023">
    <property type="term" value="F:ribosomal large subunit binding"/>
    <property type="evidence" value="ECO:0007669"/>
    <property type="project" value="TreeGrafter"/>
</dbReference>
<dbReference type="GO" id="GO:0002184">
    <property type="term" value="P:cytoplasmic translational termination"/>
    <property type="evidence" value="ECO:0007669"/>
    <property type="project" value="TreeGrafter"/>
</dbReference>
<dbReference type="CDD" id="cd00520">
    <property type="entry name" value="RRF"/>
    <property type="match status" value="1"/>
</dbReference>
<dbReference type="FunFam" id="1.10.132.20:FF:000001">
    <property type="entry name" value="Ribosome-recycling factor"/>
    <property type="match status" value="1"/>
</dbReference>
<dbReference type="FunFam" id="3.30.1360.40:FF:000001">
    <property type="entry name" value="Ribosome-recycling factor"/>
    <property type="match status" value="1"/>
</dbReference>
<dbReference type="Gene3D" id="3.30.1360.40">
    <property type="match status" value="1"/>
</dbReference>
<dbReference type="Gene3D" id="1.10.132.20">
    <property type="entry name" value="Ribosome-recycling factor"/>
    <property type="match status" value="1"/>
</dbReference>
<dbReference type="HAMAP" id="MF_00040">
    <property type="entry name" value="RRF"/>
    <property type="match status" value="1"/>
</dbReference>
<dbReference type="InterPro" id="IPR002661">
    <property type="entry name" value="Ribosome_recyc_fac"/>
</dbReference>
<dbReference type="InterPro" id="IPR023584">
    <property type="entry name" value="Ribosome_recyc_fac_dom"/>
</dbReference>
<dbReference type="InterPro" id="IPR036191">
    <property type="entry name" value="RRF_sf"/>
</dbReference>
<dbReference type="NCBIfam" id="TIGR00496">
    <property type="entry name" value="frr"/>
    <property type="match status" value="1"/>
</dbReference>
<dbReference type="PANTHER" id="PTHR20982:SF3">
    <property type="entry name" value="MITOCHONDRIAL RIBOSOME RECYCLING FACTOR PSEUDO 1"/>
    <property type="match status" value="1"/>
</dbReference>
<dbReference type="PANTHER" id="PTHR20982">
    <property type="entry name" value="RIBOSOME RECYCLING FACTOR"/>
    <property type="match status" value="1"/>
</dbReference>
<dbReference type="Pfam" id="PF01765">
    <property type="entry name" value="RRF"/>
    <property type="match status" value="1"/>
</dbReference>
<dbReference type="SUPFAM" id="SSF55194">
    <property type="entry name" value="Ribosome recycling factor, RRF"/>
    <property type="match status" value="1"/>
</dbReference>
<organism>
    <name type="scientific">Bartonella bacilliformis (strain ATCC 35685 / KC583 / Herrer 020/F12,63)</name>
    <dbReference type="NCBI Taxonomy" id="360095"/>
    <lineage>
        <taxon>Bacteria</taxon>
        <taxon>Pseudomonadati</taxon>
        <taxon>Pseudomonadota</taxon>
        <taxon>Alphaproteobacteria</taxon>
        <taxon>Hyphomicrobiales</taxon>
        <taxon>Bartonellaceae</taxon>
        <taxon>Bartonella</taxon>
    </lineage>
</organism>
<feature type="chain" id="PRO_0000167414" description="Ribosome-recycling factor">
    <location>
        <begin position="1"/>
        <end position="186"/>
    </location>
</feature>
<comment type="function">
    <text evidence="1">Responsible for the release of ribosomes from messenger RNA at the termination of protein biosynthesis. May increase the efficiency of translation by recycling ribosomes from one round of translation to another.</text>
</comment>
<comment type="subcellular location">
    <subcellularLocation>
        <location evidence="1">Cytoplasm</location>
    </subcellularLocation>
</comment>
<comment type="similarity">
    <text evidence="1">Belongs to the RRF family.</text>
</comment>
<evidence type="ECO:0000255" key="1">
    <source>
        <dbReference type="HAMAP-Rule" id="MF_00040"/>
    </source>
</evidence>
<proteinExistence type="inferred from homology"/>
<reference key="1">
    <citation type="submission" date="2002-01" db="EMBL/GenBank/DDBJ databases">
        <title>Translational machinery operon from Bartonella bacilliformis.</title>
        <authorList>
            <person name="Minnick M.F."/>
            <person name="Choquette L.E."/>
        </authorList>
    </citation>
    <scope>NUCLEOTIDE SEQUENCE [GENOMIC DNA]</scope>
</reference>
<reference key="2">
    <citation type="submission" date="2006-12" db="EMBL/GenBank/DDBJ databases">
        <authorList>
            <person name="Hendrix L."/>
            <person name="Mohamoud Y."/>
            <person name="Radune D."/>
            <person name="Shvartsbeyn A."/>
            <person name="Daugherty S."/>
            <person name="Dodson R."/>
            <person name="Durkin A.S."/>
            <person name="Harkins D."/>
            <person name="Huot H."/>
            <person name="Kothari S.P."/>
            <person name="Madupu R."/>
            <person name="Li J."/>
            <person name="Nelson W.C."/>
            <person name="Shrivastava S."/>
            <person name="Giglio M.G."/>
            <person name="Haft D."/>
            <person name="Selengut J."/>
            <person name="Fraser-Ligget C."/>
            <person name="Seshadri R."/>
        </authorList>
    </citation>
    <scope>NUCLEOTIDE SEQUENCE [LARGE SCALE GENOMIC DNA]</scope>
    <source>
        <strain>ATCC 35685 / KC583 / Herrer 020/F12,63</strain>
    </source>
</reference>
<keyword id="KW-0963">Cytoplasm</keyword>
<keyword id="KW-0648">Protein biosynthesis</keyword>
<name>RRF_BARBK</name>
<accession>Q8RT64</accession>
<accession>A1USE2</accession>
<gene>
    <name evidence="1" type="primary">frr</name>
    <name type="synonym">rrf</name>
    <name type="ordered locus">BARBAKC583_0586</name>
</gene>